<comment type="function">
    <text evidence="1">Dol-P-Man:Man(5)GlcNAc(2)-PP-Dol alpha-1,3-mannosyltransferase that operates in the biosynthetic pathway of dolichol-linked oligosaccharides, the glycan precursors employed in protein asparagine (N)-glycosylation. The assembly of dolichol-linked oligosaccharides begins on the cytosolic side of the endoplasmic reticulum membrane and finishes in its lumen. The sequential addition of sugars to dolichol pyrophosphate produces dolichol-linked oligosaccharides containing fourteen sugars, including two GlcNAcs, nine mannoses and three glucoses. Once assembled, the oligosaccharide is transferred from the lipid to nascent proteins by oligosaccharyltransferases. In the lumen of the endoplasmic reticulum, adds the first dolichyl beta-D-mannosyl phosphate derived mannose in an alpha-1,3 linkage to Man(5)GlcNAc(2)-PP-dolichol to produce Man(6)GlcNAc(2)-PP-dolichol.</text>
</comment>
<comment type="catalytic activity">
    <reaction evidence="1">
        <text>an alpha-D-Man-(1-&gt;2)-alpha-D-Man-(1-&gt;2)-alpha-D-Man-(1-&gt;3)-[alpha-D-Man-(1-&gt;6)]-beta-D-Man-(1-&gt;4)-beta-D-GlcNAc-(1-&gt;4)-alpha-D-GlcNAc-diphospho-di-trans,poly-cis-dolichol + a di-trans,poly-cis-dolichyl beta-D-mannosyl phosphate = an alpha-D-Man-(1-&gt;2)-alpha-D-Man-(1-&gt;2)-alpha-D-Man-(1-&gt;3)-[alpha-D-Man-(1-&gt;3)-alpha-D-Man-(1-&gt;6)]-beta-D-Man-(1-&gt;4)-beta-D-GlcNAc-(1-&gt;4)-alpha-D-GlcNAc-diphospho-di-trans,poly-cis-dolichol + a di-trans,poly-cis-dolichyl phosphate + H(+)</text>
        <dbReference type="Rhea" id="RHEA:29527"/>
        <dbReference type="Rhea" id="RHEA-COMP:19498"/>
        <dbReference type="Rhea" id="RHEA-COMP:19501"/>
        <dbReference type="Rhea" id="RHEA-COMP:19516"/>
        <dbReference type="Rhea" id="RHEA-COMP:19517"/>
        <dbReference type="ChEBI" id="CHEBI:15378"/>
        <dbReference type="ChEBI" id="CHEBI:57683"/>
        <dbReference type="ChEBI" id="CHEBI:58211"/>
        <dbReference type="ChEBI" id="CHEBI:132515"/>
        <dbReference type="ChEBI" id="CHEBI:132516"/>
        <dbReference type="EC" id="2.4.1.258"/>
    </reaction>
    <physiologicalReaction direction="left-to-right" evidence="1">
        <dbReference type="Rhea" id="RHEA:29528"/>
    </physiologicalReaction>
</comment>
<comment type="pathway">
    <text evidence="1">Protein modification; protein glycosylation.</text>
</comment>
<comment type="subcellular location">
    <subcellularLocation>
        <location evidence="1">Endoplasmic reticulum membrane</location>
        <topology evidence="2">Multi-pass membrane protein</topology>
    </subcellularLocation>
</comment>
<comment type="similarity">
    <text evidence="3">Belongs to the glycosyltransferase ALG3 family.</text>
</comment>
<feature type="chain" id="PRO_0000350921" description="Dol-P-Man:Man(5)GlcNAc(2)-PP-Dol alpha-1,3-mannosyltransferase">
    <location>
        <begin position="1"/>
        <end position="419"/>
    </location>
</feature>
<feature type="topological domain" description="Lumenal" evidence="2">
    <location>
        <begin position="1"/>
        <end position="24"/>
    </location>
</feature>
<feature type="transmembrane region" description="Helical" evidence="2">
    <location>
        <begin position="25"/>
        <end position="45"/>
    </location>
</feature>
<feature type="topological domain" description="Cytoplasmic" evidence="2">
    <location>
        <begin position="46"/>
        <end position="77"/>
    </location>
</feature>
<feature type="transmembrane region" description="Helical" evidence="2">
    <location>
        <begin position="78"/>
        <end position="98"/>
    </location>
</feature>
<feature type="topological domain" description="Lumenal" evidence="2">
    <location>
        <begin position="99"/>
        <end position="103"/>
    </location>
</feature>
<feature type="transmembrane region" description="Helical" evidence="2">
    <location>
        <begin position="104"/>
        <end position="124"/>
    </location>
</feature>
<feature type="topological domain" description="Cytoplasmic" evidence="2">
    <location>
        <begin position="125"/>
        <end position="147"/>
    </location>
</feature>
<feature type="transmembrane region" description="Helical" evidence="2">
    <location>
        <begin position="148"/>
        <end position="170"/>
    </location>
</feature>
<feature type="topological domain" description="Lumenal" evidence="2">
    <location>
        <begin position="171"/>
        <end position="178"/>
    </location>
</feature>
<feature type="transmembrane region" description="Helical" evidence="2">
    <location>
        <begin position="179"/>
        <end position="207"/>
    </location>
</feature>
<feature type="topological domain" description="Cytoplasmic" evidence="2">
    <location>
        <begin position="208"/>
        <end position="212"/>
    </location>
</feature>
<feature type="transmembrane region" description="Helical" evidence="2">
    <location>
        <begin position="213"/>
        <end position="231"/>
    </location>
</feature>
<feature type="topological domain" description="Lumenal" evidence="2">
    <location>
        <begin position="232"/>
        <end position="269"/>
    </location>
</feature>
<feature type="transmembrane region" description="Helical" evidence="2">
    <location>
        <begin position="270"/>
        <end position="290"/>
    </location>
</feature>
<feature type="topological domain" description="Cytoplasmic" evidence="2">
    <location>
        <begin position="291"/>
        <end position="314"/>
    </location>
</feature>
<feature type="transmembrane region" description="Helical" evidence="2">
    <location>
        <begin position="315"/>
        <end position="335"/>
    </location>
</feature>
<feature type="topological domain" description="Lumenal" evidence="2">
    <location>
        <begin position="336"/>
        <end position="348"/>
    </location>
</feature>
<feature type="transmembrane region" description="Helical" evidence="2">
    <location>
        <begin position="349"/>
        <end position="369"/>
    </location>
</feature>
<feature type="topological domain" description="Cytoplasmic" evidence="2">
    <location>
        <begin position="370"/>
        <end position="383"/>
    </location>
</feature>
<feature type="transmembrane region" description="Helical" evidence="2">
    <location>
        <begin position="384"/>
        <end position="404"/>
    </location>
</feature>
<feature type="topological domain" description="Lumenal" evidence="2">
    <location>
        <begin position="405"/>
        <end position="419"/>
    </location>
</feature>
<sequence>MQLHRINTMDLKHSLRDLCMNPRHTSWAAPLLILGDAVLCALIIWRVPYTEIDWTTYMQQISLYISGERDYTLIKGSTGPLVYPAAHVYIYNILYHLTDEGRDIFLGQILFAILYLATLTVAMTCYRQAGAPPYLLVPLVLSKRLHSVFMLRLFNDGIAAFAMWVSIFLFMNKKLAAGVIVWSTGVAIKMTLLLLAPAIAMVLVLSLSFGPSIRLGFLAVLIQVLFGIPFLRNNPAGYVSRAFELTRQFMFKWTVNWRFVGEELFLSRKFSLALLALHLLLLGLFVATVWLEPSGSNLPSFLQRLIQRRYRTASLSKSFVMTAMLSSLAIGLLCARSLHYQFFAYLACATPFLLWQAGFHPILVYVVWAAQEWAWNAYPSTNASSLVVVLSLAAQVFGVLGNSFSRKHLDQSSQKEHMQ</sequence>
<organism>
    <name type="scientific">Aspergillus fumigatus (strain ATCC MYA-4609 / CBS 101355 / FGSC A1100 / Af293)</name>
    <name type="common">Neosartorya fumigata</name>
    <dbReference type="NCBI Taxonomy" id="330879"/>
    <lineage>
        <taxon>Eukaryota</taxon>
        <taxon>Fungi</taxon>
        <taxon>Dikarya</taxon>
        <taxon>Ascomycota</taxon>
        <taxon>Pezizomycotina</taxon>
        <taxon>Eurotiomycetes</taxon>
        <taxon>Eurotiomycetidae</taxon>
        <taxon>Eurotiales</taxon>
        <taxon>Aspergillaceae</taxon>
        <taxon>Aspergillus</taxon>
        <taxon>Aspergillus subgen. Fumigati</taxon>
    </lineage>
</organism>
<accession>Q4WVG2</accession>
<reference key="1">
    <citation type="journal article" date="2005" name="Nature">
        <title>Genomic sequence of the pathogenic and allergenic filamentous fungus Aspergillus fumigatus.</title>
        <authorList>
            <person name="Nierman W.C."/>
            <person name="Pain A."/>
            <person name="Anderson M.J."/>
            <person name="Wortman J.R."/>
            <person name="Kim H.S."/>
            <person name="Arroyo J."/>
            <person name="Berriman M."/>
            <person name="Abe K."/>
            <person name="Archer D.B."/>
            <person name="Bermejo C."/>
            <person name="Bennett J.W."/>
            <person name="Bowyer P."/>
            <person name="Chen D."/>
            <person name="Collins M."/>
            <person name="Coulsen R."/>
            <person name="Davies R."/>
            <person name="Dyer P.S."/>
            <person name="Farman M.L."/>
            <person name="Fedorova N."/>
            <person name="Fedorova N.D."/>
            <person name="Feldblyum T.V."/>
            <person name="Fischer R."/>
            <person name="Fosker N."/>
            <person name="Fraser A."/>
            <person name="Garcia J.L."/>
            <person name="Garcia M.J."/>
            <person name="Goble A."/>
            <person name="Goldman G.H."/>
            <person name="Gomi K."/>
            <person name="Griffith-Jones S."/>
            <person name="Gwilliam R."/>
            <person name="Haas B.J."/>
            <person name="Haas H."/>
            <person name="Harris D.E."/>
            <person name="Horiuchi H."/>
            <person name="Huang J."/>
            <person name="Humphray S."/>
            <person name="Jimenez J."/>
            <person name="Keller N."/>
            <person name="Khouri H."/>
            <person name="Kitamoto K."/>
            <person name="Kobayashi T."/>
            <person name="Konzack S."/>
            <person name="Kulkarni R."/>
            <person name="Kumagai T."/>
            <person name="Lafton A."/>
            <person name="Latge J.-P."/>
            <person name="Li W."/>
            <person name="Lord A."/>
            <person name="Lu C."/>
            <person name="Majoros W.H."/>
            <person name="May G.S."/>
            <person name="Miller B.L."/>
            <person name="Mohamoud Y."/>
            <person name="Molina M."/>
            <person name="Monod M."/>
            <person name="Mouyna I."/>
            <person name="Mulligan S."/>
            <person name="Murphy L.D."/>
            <person name="O'Neil S."/>
            <person name="Paulsen I."/>
            <person name="Penalva M.A."/>
            <person name="Pertea M."/>
            <person name="Price C."/>
            <person name="Pritchard B.L."/>
            <person name="Quail M.A."/>
            <person name="Rabbinowitsch E."/>
            <person name="Rawlins N."/>
            <person name="Rajandream M.A."/>
            <person name="Reichard U."/>
            <person name="Renauld H."/>
            <person name="Robson G.D."/>
            <person name="Rodriguez de Cordoba S."/>
            <person name="Rodriguez-Pena J.M."/>
            <person name="Ronning C.M."/>
            <person name="Rutter S."/>
            <person name="Salzberg S.L."/>
            <person name="Sanchez M."/>
            <person name="Sanchez-Ferrero J.C."/>
            <person name="Saunders D."/>
            <person name="Seeger K."/>
            <person name="Squares R."/>
            <person name="Squares S."/>
            <person name="Takeuchi M."/>
            <person name="Tekaia F."/>
            <person name="Turner G."/>
            <person name="Vazquez de Aldana C.R."/>
            <person name="Weidman J."/>
            <person name="White O."/>
            <person name="Woodward J.R."/>
            <person name="Yu J.-H."/>
            <person name="Fraser C.M."/>
            <person name="Galagan J.E."/>
            <person name="Asai K."/>
            <person name="Machida M."/>
            <person name="Hall N."/>
            <person name="Barrell B.G."/>
            <person name="Denning D.W."/>
        </authorList>
    </citation>
    <scope>NUCLEOTIDE SEQUENCE [LARGE SCALE GENOMIC DNA]</scope>
    <source>
        <strain>ATCC MYA-4609 / CBS 101355 / FGSC A1100 / Af293</strain>
    </source>
</reference>
<keyword id="KW-0256">Endoplasmic reticulum</keyword>
<keyword id="KW-0328">Glycosyltransferase</keyword>
<keyword id="KW-0472">Membrane</keyword>
<keyword id="KW-1185">Reference proteome</keyword>
<keyword id="KW-0808">Transferase</keyword>
<keyword id="KW-0812">Transmembrane</keyword>
<keyword id="KW-1133">Transmembrane helix</keyword>
<evidence type="ECO:0000250" key="1">
    <source>
        <dbReference type="UniProtKB" id="P38179"/>
    </source>
</evidence>
<evidence type="ECO:0000255" key="2"/>
<evidence type="ECO:0000305" key="3"/>
<gene>
    <name type="primary">alg3</name>
    <name type="ORF">AFUA_5G11990</name>
</gene>
<protein>
    <recommendedName>
        <fullName evidence="1">Dol-P-Man:Man(5)GlcNAc(2)-PP-Dol alpha-1,3-mannosyltransferase</fullName>
        <ecNumber evidence="1">2.4.1.258</ecNumber>
    </recommendedName>
    <alternativeName>
        <fullName>Asparagine-linked glycosylation protein 6</fullName>
    </alternativeName>
    <alternativeName>
        <fullName>Dol-P-Man-dependent alpha(1-3)-mannosyltransferase</fullName>
    </alternativeName>
    <alternativeName>
        <fullName>Dolichyl-P-Man:Man(5)GlcNAc(2)-PP-dolichyl mannosyltransferase</fullName>
    </alternativeName>
</protein>
<name>ALG3_ASPFU</name>
<proteinExistence type="inferred from homology"/>
<dbReference type="EC" id="2.4.1.258" evidence="1"/>
<dbReference type="EMBL" id="AAHF01000003">
    <property type="protein sequence ID" value="EAL91414.1"/>
    <property type="molecule type" value="Genomic_DNA"/>
</dbReference>
<dbReference type="RefSeq" id="XP_753452.1">
    <property type="nucleotide sequence ID" value="XM_748359.1"/>
</dbReference>
<dbReference type="FunCoup" id="Q4WVG2">
    <property type="interactions" value="651"/>
</dbReference>
<dbReference type="STRING" id="330879.Q4WVG2"/>
<dbReference type="EnsemblFungi" id="EAL91414">
    <property type="protein sequence ID" value="EAL91414"/>
    <property type="gene ID" value="AFUA_5G11990"/>
</dbReference>
<dbReference type="GeneID" id="3511581"/>
<dbReference type="KEGG" id="afm:AFUA_5G11990"/>
<dbReference type="VEuPathDB" id="FungiDB:Afu5g11990"/>
<dbReference type="eggNOG" id="KOG2762">
    <property type="taxonomic scope" value="Eukaryota"/>
</dbReference>
<dbReference type="HOGENOM" id="CLU_035382_3_0_1"/>
<dbReference type="InParanoid" id="Q4WVG2"/>
<dbReference type="OMA" id="PERYGIH"/>
<dbReference type="OrthoDB" id="20028at2759"/>
<dbReference type="UniPathway" id="UPA00378"/>
<dbReference type="Proteomes" id="UP000002530">
    <property type="component" value="Chromosome 5"/>
</dbReference>
<dbReference type="GO" id="GO:0005783">
    <property type="term" value="C:endoplasmic reticulum"/>
    <property type="evidence" value="ECO:0000318"/>
    <property type="project" value="GO_Central"/>
</dbReference>
<dbReference type="GO" id="GO:0005789">
    <property type="term" value="C:endoplasmic reticulum membrane"/>
    <property type="evidence" value="ECO:0007669"/>
    <property type="project" value="UniProtKB-SubCell"/>
</dbReference>
<dbReference type="GO" id="GO:0052925">
    <property type="term" value="F:dol-P-Man:Man(5)GlcNAc(2)-PP-Dol alpha-1,3-mannosyltransferase activity"/>
    <property type="evidence" value="ECO:0000318"/>
    <property type="project" value="GO_Central"/>
</dbReference>
<dbReference type="GO" id="GO:0006488">
    <property type="term" value="P:dolichol-linked oligosaccharide biosynthetic process"/>
    <property type="evidence" value="ECO:0007669"/>
    <property type="project" value="EnsemblFungi"/>
</dbReference>
<dbReference type="GO" id="GO:0006486">
    <property type="term" value="P:protein glycosylation"/>
    <property type="evidence" value="ECO:0000318"/>
    <property type="project" value="GO_Central"/>
</dbReference>
<dbReference type="InterPro" id="IPR007873">
    <property type="entry name" value="Glycosyltransferase_ALG3"/>
</dbReference>
<dbReference type="PANTHER" id="PTHR12646:SF0">
    <property type="entry name" value="DOL-P-MAN:MAN(5)GLCNAC(2)-PP-DOL ALPHA-1,3-MANNOSYLTRANSFERASE"/>
    <property type="match status" value="1"/>
</dbReference>
<dbReference type="PANTHER" id="PTHR12646">
    <property type="entry name" value="NOT56 - RELATED"/>
    <property type="match status" value="1"/>
</dbReference>
<dbReference type="Pfam" id="PF05208">
    <property type="entry name" value="ALG3"/>
    <property type="match status" value="1"/>
</dbReference>